<evidence type="ECO:0000255" key="1">
    <source>
        <dbReference type="HAMAP-Rule" id="MF_00494"/>
    </source>
</evidence>
<accession>Q48RY1</accession>
<protein>
    <recommendedName>
        <fullName evidence="1">Probable transaldolase</fullName>
        <ecNumber evidence="1">2.2.1.2</ecNumber>
    </recommendedName>
</protein>
<gene>
    <name evidence="1" type="primary">tal</name>
    <name type="ordered locus">M28_Spy1419</name>
</gene>
<sequence>MKFFLDTANVAAIKAINELGVVDGVTTNPTIISREGRDFETVIKEICDIVDGPISAEVTGLTADAMVEEARSIAKWHDNVVVKIPMTTEGLKATNILSKEGIKTNVTLIFTVSQGLMAMKAGATYISPFIGRLEDIGTDAYQLISDLREIIDLYDFQAEIIAASIRTTAHVEAVAKLGAHIATIPDPLFAKMTQHPLTTNGLKTFMEDWASFKK</sequence>
<feature type="chain" id="PRO_1000060482" description="Probable transaldolase">
    <location>
        <begin position="1"/>
        <end position="214"/>
    </location>
</feature>
<feature type="active site" description="Schiff-base intermediate with substrate" evidence="1">
    <location>
        <position position="83"/>
    </location>
</feature>
<dbReference type="EC" id="2.2.1.2" evidence="1"/>
<dbReference type="EMBL" id="CP000056">
    <property type="protein sequence ID" value="AAX72529.1"/>
    <property type="molecule type" value="Genomic_DNA"/>
</dbReference>
<dbReference type="SMR" id="Q48RY1"/>
<dbReference type="KEGG" id="spb:M28_Spy1419"/>
<dbReference type="HOGENOM" id="CLU_079764_0_0_9"/>
<dbReference type="UniPathway" id="UPA00115">
    <property type="reaction ID" value="UER00414"/>
</dbReference>
<dbReference type="GO" id="GO:0005737">
    <property type="term" value="C:cytoplasm"/>
    <property type="evidence" value="ECO:0007669"/>
    <property type="project" value="UniProtKB-SubCell"/>
</dbReference>
<dbReference type="GO" id="GO:0016832">
    <property type="term" value="F:aldehyde-lyase activity"/>
    <property type="evidence" value="ECO:0007669"/>
    <property type="project" value="InterPro"/>
</dbReference>
<dbReference type="GO" id="GO:0004801">
    <property type="term" value="F:transaldolase activity"/>
    <property type="evidence" value="ECO:0007669"/>
    <property type="project" value="UniProtKB-UniRule"/>
</dbReference>
<dbReference type="GO" id="GO:0005975">
    <property type="term" value="P:carbohydrate metabolic process"/>
    <property type="evidence" value="ECO:0007669"/>
    <property type="project" value="InterPro"/>
</dbReference>
<dbReference type="GO" id="GO:0006098">
    <property type="term" value="P:pentose-phosphate shunt"/>
    <property type="evidence" value="ECO:0007669"/>
    <property type="project" value="UniProtKB-UniRule"/>
</dbReference>
<dbReference type="CDD" id="cd00956">
    <property type="entry name" value="Transaldolase_FSA"/>
    <property type="match status" value="1"/>
</dbReference>
<dbReference type="FunFam" id="3.20.20.70:FF:000018">
    <property type="entry name" value="Probable transaldolase"/>
    <property type="match status" value="1"/>
</dbReference>
<dbReference type="Gene3D" id="3.20.20.70">
    <property type="entry name" value="Aldolase class I"/>
    <property type="match status" value="1"/>
</dbReference>
<dbReference type="HAMAP" id="MF_00494">
    <property type="entry name" value="Transaldolase_3b"/>
    <property type="match status" value="1"/>
</dbReference>
<dbReference type="InterPro" id="IPR013785">
    <property type="entry name" value="Aldolase_TIM"/>
</dbReference>
<dbReference type="InterPro" id="IPR001585">
    <property type="entry name" value="TAL/FSA"/>
</dbReference>
<dbReference type="InterPro" id="IPR022999">
    <property type="entry name" value="Transaldolase_3B"/>
</dbReference>
<dbReference type="InterPro" id="IPR004731">
    <property type="entry name" value="Transaldolase_3B/F6P_aldolase"/>
</dbReference>
<dbReference type="InterPro" id="IPR018225">
    <property type="entry name" value="Transaldolase_AS"/>
</dbReference>
<dbReference type="InterPro" id="IPR033919">
    <property type="entry name" value="TSA/FSA_arc/bac"/>
</dbReference>
<dbReference type="NCBIfam" id="TIGR00875">
    <property type="entry name" value="fsa_talC_mipB"/>
    <property type="match status" value="1"/>
</dbReference>
<dbReference type="PANTHER" id="PTHR10683">
    <property type="entry name" value="TRANSALDOLASE"/>
    <property type="match status" value="1"/>
</dbReference>
<dbReference type="PANTHER" id="PTHR10683:SF36">
    <property type="entry name" value="TRANSALDOLASE"/>
    <property type="match status" value="1"/>
</dbReference>
<dbReference type="Pfam" id="PF00923">
    <property type="entry name" value="TAL_FSA"/>
    <property type="match status" value="1"/>
</dbReference>
<dbReference type="SUPFAM" id="SSF51569">
    <property type="entry name" value="Aldolase"/>
    <property type="match status" value="1"/>
</dbReference>
<dbReference type="PROSITE" id="PS01054">
    <property type="entry name" value="TRANSALDOLASE_1"/>
    <property type="match status" value="1"/>
</dbReference>
<dbReference type="PROSITE" id="PS00958">
    <property type="entry name" value="TRANSALDOLASE_2"/>
    <property type="match status" value="1"/>
</dbReference>
<reference key="1">
    <citation type="journal article" date="2005" name="J. Infect. Dis.">
        <title>Genome sequence of a serotype M28 strain of group A Streptococcus: potential new insights into puerperal sepsis and bacterial disease specificity.</title>
        <authorList>
            <person name="Green N.M."/>
            <person name="Zhang S."/>
            <person name="Porcella S.F."/>
            <person name="Nagiec M.J."/>
            <person name="Barbian K.D."/>
            <person name="Beres S.B."/>
            <person name="Lefebvre R.B."/>
            <person name="Musser J.M."/>
        </authorList>
    </citation>
    <scope>NUCLEOTIDE SEQUENCE [LARGE SCALE GENOMIC DNA]</scope>
    <source>
        <strain>MGAS6180</strain>
    </source>
</reference>
<name>TAL_STRPM</name>
<keyword id="KW-0963">Cytoplasm</keyword>
<keyword id="KW-0570">Pentose shunt</keyword>
<keyword id="KW-0704">Schiff base</keyword>
<keyword id="KW-0808">Transferase</keyword>
<proteinExistence type="inferred from homology"/>
<comment type="function">
    <text evidence="1">Transaldolase is important for the balance of metabolites in the pentose-phosphate pathway.</text>
</comment>
<comment type="catalytic activity">
    <reaction evidence="1">
        <text>D-sedoheptulose 7-phosphate + D-glyceraldehyde 3-phosphate = D-erythrose 4-phosphate + beta-D-fructose 6-phosphate</text>
        <dbReference type="Rhea" id="RHEA:17053"/>
        <dbReference type="ChEBI" id="CHEBI:16897"/>
        <dbReference type="ChEBI" id="CHEBI:57483"/>
        <dbReference type="ChEBI" id="CHEBI:57634"/>
        <dbReference type="ChEBI" id="CHEBI:59776"/>
        <dbReference type="EC" id="2.2.1.2"/>
    </reaction>
</comment>
<comment type="pathway">
    <text evidence="1">Carbohydrate degradation; pentose phosphate pathway; D-glyceraldehyde 3-phosphate and beta-D-fructose 6-phosphate from D-ribose 5-phosphate and D-xylulose 5-phosphate (non-oxidative stage): step 2/3.</text>
</comment>
<comment type="subcellular location">
    <subcellularLocation>
        <location evidence="1">Cytoplasm</location>
    </subcellularLocation>
</comment>
<comment type="similarity">
    <text evidence="1">Belongs to the transaldolase family. Type 3B subfamily.</text>
</comment>
<organism>
    <name type="scientific">Streptococcus pyogenes serotype M28 (strain MGAS6180)</name>
    <dbReference type="NCBI Taxonomy" id="319701"/>
    <lineage>
        <taxon>Bacteria</taxon>
        <taxon>Bacillati</taxon>
        <taxon>Bacillota</taxon>
        <taxon>Bacilli</taxon>
        <taxon>Lactobacillales</taxon>
        <taxon>Streptococcaceae</taxon>
        <taxon>Streptococcus</taxon>
    </lineage>
</organism>